<organism>
    <name type="scientific">Leuconostoc mesenteroides subsp. mesenteroides (strain ATCC 8293 / DSM 20343 / BCRC 11652 / CCM 1803 / JCM 6124 / NCDO 523 / NBRC 100496 / NCIMB 8023 / NCTC 12954 / NRRL B-1118 / 37Y)</name>
    <dbReference type="NCBI Taxonomy" id="203120"/>
    <lineage>
        <taxon>Bacteria</taxon>
        <taxon>Bacillati</taxon>
        <taxon>Bacillota</taxon>
        <taxon>Bacilli</taxon>
        <taxon>Lactobacillales</taxon>
        <taxon>Lactobacillaceae</taxon>
        <taxon>Leuconostoc</taxon>
    </lineage>
</organism>
<reference key="1">
    <citation type="journal article" date="2006" name="Proc. Natl. Acad. Sci. U.S.A.">
        <title>Comparative genomics of the lactic acid bacteria.</title>
        <authorList>
            <person name="Makarova K.S."/>
            <person name="Slesarev A."/>
            <person name="Wolf Y.I."/>
            <person name="Sorokin A."/>
            <person name="Mirkin B."/>
            <person name="Koonin E.V."/>
            <person name="Pavlov A."/>
            <person name="Pavlova N."/>
            <person name="Karamychev V."/>
            <person name="Polouchine N."/>
            <person name="Shakhova V."/>
            <person name="Grigoriev I."/>
            <person name="Lou Y."/>
            <person name="Rohksar D."/>
            <person name="Lucas S."/>
            <person name="Huang K."/>
            <person name="Goodstein D.M."/>
            <person name="Hawkins T."/>
            <person name="Plengvidhya V."/>
            <person name="Welker D."/>
            <person name="Hughes J."/>
            <person name="Goh Y."/>
            <person name="Benson A."/>
            <person name="Baldwin K."/>
            <person name="Lee J.-H."/>
            <person name="Diaz-Muniz I."/>
            <person name="Dosti B."/>
            <person name="Smeianov V."/>
            <person name="Wechter W."/>
            <person name="Barabote R."/>
            <person name="Lorca G."/>
            <person name="Altermann E."/>
            <person name="Barrangou R."/>
            <person name="Ganesan B."/>
            <person name="Xie Y."/>
            <person name="Rawsthorne H."/>
            <person name="Tamir D."/>
            <person name="Parker C."/>
            <person name="Breidt F."/>
            <person name="Broadbent J.R."/>
            <person name="Hutkins R."/>
            <person name="O'Sullivan D."/>
            <person name="Steele J."/>
            <person name="Unlu G."/>
            <person name="Saier M.H. Jr."/>
            <person name="Klaenhammer T."/>
            <person name="Richardson P."/>
            <person name="Kozyavkin S."/>
            <person name="Weimer B.C."/>
            <person name="Mills D.A."/>
        </authorList>
    </citation>
    <scope>NUCLEOTIDE SEQUENCE [LARGE SCALE GENOMIC DNA]</scope>
    <source>
        <strain>ATCC 8293 / DSM 20343 / BCRC 11652 / CCM 1803 / JCM 6124 / NCDO 523 / NBRC 100496 / NCIMB 8023 / NCTC 12954 / NRRL B-1118 / 37Y</strain>
    </source>
</reference>
<keyword id="KW-0028">Amino-acid biosynthesis</keyword>
<keyword id="KW-0963">Cytoplasm</keyword>
<keyword id="KW-0554">One-carbon metabolism</keyword>
<keyword id="KW-0663">Pyridoxal phosphate</keyword>
<keyword id="KW-1185">Reference proteome</keyword>
<keyword id="KW-0808">Transferase</keyword>
<gene>
    <name evidence="1" type="primary">glyA</name>
    <name type="ordered locus">LEUM_0788</name>
</gene>
<accession>Q03Y25</accession>
<proteinExistence type="inferred from homology"/>
<feature type="chain" id="PRO_1000006278" description="Serine hydroxymethyltransferase">
    <location>
        <begin position="1"/>
        <end position="410"/>
    </location>
</feature>
<feature type="binding site" evidence="1">
    <location>
        <position position="116"/>
    </location>
    <ligand>
        <name>(6S)-5,6,7,8-tetrahydrofolate</name>
        <dbReference type="ChEBI" id="CHEBI:57453"/>
    </ligand>
</feature>
<feature type="binding site" evidence="1">
    <location>
        <begin position="120"/>
        <end position="122"/>
    </location>
    <ligand>
        <name>(6S)-5,6,7,8-tetrahydrofolate</name>
        <dbReference type="ChEBI" id="CHEBI:57453"/>
    </ligand>
</feature>
<feature type="binding site" evidence="1">
    <location>
        <begin position="349"/>
        <end position="351"/>
    </location>
    <ligand>
        <name>(6S)-5,6,7,8-tetrahydrofolate</name>
        <dbReference type="ChEBI" id="CHEBI:57453"/>
    </ligand>
</feature>
<feature type="site" description="Plays an important role in substrate specificity" evidence="1">
    <location>
        <position position="224"/>
    </location>
</feature>
<feature type="modified residue" description="N6-(pyridoxal phosphate)lysine" evidence="1">
    <location>
        <position position="225"/>
    </location>
</feature>
<sequence length="410" mass="44557">MSYQELDPIVWSAIQQESARQNRTIELIASENFTSQAVRAAQGSVLTNKYAEGYPYKRYYGGTEYVDVVEQVAIDRLKELFGAEYANVQPHSGSQANAAAYMAFLKPGDKILGMSLDAGGHLTHGAKVSFSGKVYESHTYGLNSETETLDYEAIAKQAREVKPQMIVAGASAYSRIIEFDKFRAIADEVGAYLMVDMAHIAGLVAAGLHPNPVGIADVVTSTTHKTLRGPRGGVILSQEKYAKQLNSAIFPGSQGGPLEHIIAGKAIAFGEALQPKFKDYAQQVIKNAQAMAKVFNDTEDIRVVAGGTDNHLFNLDLTKTALNGKQTQELLDTVSITTNKEALPNEQLSPFVTSGIRIGTAAITTRGFDEDDATNVAELIVTAIHHYDDEKVLKQVKREAEALAMTHLFE</sequence>
<dbReference type="EC" id="2.1.2.1" evidence="1"/>
<dbReference type="EMBL" id="CP000414">
    <property type="protein sequence ID" value="ABJ61897.1"/>
    <property type="molecule type" value="Genomic_DNA"/>
</dbReference>
<dbReference type="RefSeq" id="WP_011679566.1">
    <property type="nucleotide sequence ID" value="NC_008531.1"/>
</dbReference>
<dbReference type="SMR" id="Q03Y25"/>
<dbReference type="EnsemblBacteria" id="ABJ61897">
    <property type="protein sequence ID" value="ABJ61897"/>
    <property type="gene ID" value="LEUM_0788"/>
</dbReference>
<dbReference type="GeneID" id="29576037"/>
<dbReference type="KEGG" id="lme:LEUM_0788"/>
<dbReference type="eggNOG" id="COG0112">
    <property type="taxonomic scope" value="Bacteria"/>
</dbReference>
<dbReference type="HOGENOM" id="CLU_022477_2_1_9"/>
<dbReference type="UniPathway" id="UPA00193"/>
<dbReference type="UniPathway" id="UPA00288">
    <property type="reaction ID" value="UER01023"/>
</dbReference>
<dbReference type="Proteomes" id="UP000000362">
    <property type="component" value="Chromosome"/>
</dbReference>
<dbReference type="GO" id="GO:0005829">
    <property type="term" value="C:cytosol"/>
    <property type="evidence" value="ECO:0007669"/>
    <property type="project" value="TreeGrafter"/>
</dbReference>
<dbReference type="GO" id="GO:0004372">
    <property type="term" value="F:glycine hydroxymethyltransferase activity"/>
    <property type="evidence" value="ECO:0007669"/>
    <property type="project" value="UniProtKB-UniRule"/>
</dbReference>
<dbReference type="GO" id="GO:0030170">
    <property type="term" value="F:pyridoxal phosphate binding"/>
    <property type="evidence" value="ECO:0007669"/>
    <property type="project" value="UniProtKB-UniRule"/>
</dbReference>
<dbReference type="GO" id="GO:0019264">
    <property type="term" value="P:glycine biosynthetic process from serine"/>
    <property type="evidence" value="ECO:0007669"/>
    <property type="project" value="UniProtKB-UniRule"/>
</dbReference>
<dbReference type="GO" id="GO:0035999">
    <property type="term" value="P:tetrahydrofolate interconversion"/>
    <property type="evidence" value="ECO:0007669"/>
    <property type="project" value="UniProtKB-UniRule"/>
</dbReference>
<dbReference type="CDD" id="cd00378">
    <property type="entry name" value="SHMT"/>
    <property type="match status" value="1"/>
</dbReference>
<dbReference type="FunFam" id="3.40.640.10:FF:000001">
    <property type="entry name" value="Serine hydroxymethyltransferase"/>
    <property type="match status" value="1"/>
</dbReference>
<dbReference type="Gene3D" id="3.90.1150.10">
    <property type="entry name" value="Aspartate Aminotransferase, domain 1"/>
    <property type="match status" value="1"/>
</dbReference>
<dbReference type="Gene3D" id="3.40.640.10">
    <property type="entry name" value="Type I PLP-dependent aspartate aminotransferase-like (Major domain)"/>
    <property type="match status" value="1"/>
</dbReference>
<dbReference type="HAMAP" id="MF_00051">
    <property type="entry name" value="SHMT"/>
    <property type="match status" value="1"/>
</dbReference>
<dbReference type="InterPro" id="IPR015424">
    <property type="entry name" value="PyrdxlP-dep_Trfase"/>
</dbReference>
<dbReference type="InterPro" id="IPR015421">
    <property type="entry name" value="PyrdxlP-dep_Trfase_major"/>
</dbReference>
<dbReference type="InterPro" id="IPR015422">
    <property type="entry name" value="PyrdxlP-dep_Trfase_small"/>
</dbReference>
<dbReference type="InterPro" id="IPR001085">
    <property type="entry name" value="Ser_HO-MeTrfase"/>
</dbReference>
<dbReference type="InterPro" id="IPR049943">
    <property type="entry name" value="Ser_HO-MeTrfase-like"/>
</dbReference>
<dbReference type="InterPro" id="IPR019798">
    <property type="entry name" value="Ser_HO-MeTrfase_PLP_BS"/>
</dbReference>
<dbReference type="InterPro" id="IPR039429">
    <property type="entry name" value="SHMT-like_dom"/>
</dbReference>
<dbReference type="NCBIfam" id="NF000586">
    <property type="entry name" value="PRK00011.1"/>
    <property type="match status" value="1"/>
</dbReference>
<dbReference type="PANTHER" id="PTHR11680">
    <property type="entry name" value="SERINE HYDROXYMETHYLTRANSFERASE"/>
    <property type="match status" value="1"/>
</dbReference>
<dbReference type="PANTHER" id="PTHR11680:SF35">
    <property type="entry name" value="SERINE HYDROXYMETHYLTRANSFERASE 1"/>
    <property type="match status" value="1"/>
</dbReference>
<dbReference type="Pfam" id="PF00464">
    <property type="entry name" value="SHMT"/>
    <property type="match status" value="1"/>
</dbReference>
<dbReference type="PIRSF" id="PIRSF000412">
    <property type="entry name" value="SHMT"/>
    <property type="match status" value="1"/>
</dbReference>
<dbReference type="SUPFAM" id="SSF53383">
    <property type="entry name" value="PLP-dependent transferases"/>
    <property type="match status" value="1"/>
</dbReference>
<dbReference type="PROSITE" id="PS00096">
    <property type="entry name" value="SHMT"/>
    <property type="match status" value="1"/>
</dbReference>
<name>GLYA_LEUMM</name>
<comment type="function">
    <text evidence="1">Catalyzes the reversible interconversion of serine and glycine with tetrahydrofolate (THF) serving as the one-carbon carrier. This reaction serves as the major source of one-carbon groups required for the biosynthesis of purines, thymidylate, methionine, and other important biomolecules. Also exhibits THF-independent aldolase activity toward beta-hydroxyamino acids, producing glycine and aldehydes, via a retro-aldol mechanism.</text>
</comment>
<comment type="catalytic activity">
    <reaction evidence="1">
        <text>(6R)-5,10-methylene-5,6,7,8-tetrahydrofolate + glycine + H2O = (6S)-5,6,7,8-tetrahydrofolate + L-serine</text>
        <dbReference type="Rhea" id="RHEA:15481"/>
        <dbReference type="ChEBI" id="CHEBI:15377"/>
        <dbReference type="ChEBI" id="CHEBI:15636"/>
        <dbReference type="ChEBI" id="CHEBI:33384"/>
        <dbReference type="ChEBI" id="CHEBI:57305"/>
        <dbReference type="ChEBI" id="CHEBI:57453"/>
        <dbReference type="EC" id="2.1.2.1"/>
    </reaction>
</comment>
<comment type="cofactor">
    <cofactor evidence="1">
        <name>pyridoxal 5'-phosphate</name>
        <dbReference type="ChEBI" id="CHEBI:597326"/>
    </cofactor>
</comment>
<comment type="pathway">
    <text evidence="1">One-carbon metabolism; tetrahydrofolate interconversion.</text>
</comment>
<comment type="pathway">
    <text evidence="1">Amino-acid biosynthesis; glycine biosynthesis; glycine from L-serine: step 1/1.</text>
</comment>
<comment type="subunit">
    <text evidence="1">Homodimer.</text>
</comment>
<comment type="subcellular location">
    <subcellularLocation>
        <location evidence="1">Cytoplasm</location>
    </subcellularLocation>
</comment>
<comment type="similarity">
    <text evidence="1">Belongs to the SHMT family.</text>
</comment>
<evidence type="ECO:0000255" key="1">
    <source>
        <dbReference type="HAMAP-Rule" id="MF_00051"/>
    </source>
</evidence>
<protein>
    <recommendedName>
        <fullName evidence="1">Serine hydroxymethyltransferase</fullName>
        <shortName evidence="1">SHMT</shortName>
        <shortName evidence="1">Serine methylase</shortName>
        <ecNumber evidence="1">2.1.2.1</ecNumber>
    </recommendedName>
</protein>